<keyword id="KW-0067">ATP-binding</keyword>
<keyword id="KW-0963">Cytoplasm</keyword>
<keyword id="KW-0436">Ligase</keyword>
<keyword id="KW-0460">Magnesium</keyword>
<keyword id="KW-0479">Metal-binding</keyword>
<keyword id="KW-0547">Nucleotide-binding</keyword>
<keyword id="KW-0658">Purine biosynthesis</keyword>
<gene>
    <name evidence="1" type="primary">purL</name>
    <name type="ordered locus">SUN_1565</name>
</gene>
<reference key="1">
    <citation type="journal article" date="2007" name="Proc. Natl. Acad. Sci. U.S.A.">
        <title>Deep-sea vent epsilon-proteobacterial genomes provide insights into emergence of pathogens.</title>
        <authorList>
            <person name="Nakagawa S."/>
            <person name="Takaki Y."/>
            <person name="Shimamura S."/>
            <person name="Reysenbach A.-L."/>
            <person name="Takai K."/>
            <person name="Horikoshi K."/>
        </authorList>
    </citation>
    <scope>NUCLEOTIDE SEQUENCE [LARGE SCALE GENOMIC DNA]</scope>
    <source>
        <strain>NBC37-1</strain>
    </source>
</reference>
<sequence>MSQPVENLDEVLKNHKLSKEEYEDILRILDGRHPNIVEIGIFSAMWSEHCSYKSSKKYLNGFPTKAPWVIQGPGENAGVIDIGDGMAAVFKMESHNHPSFIEPFQGAATGVGGILRDIFTMGARPVANLNALRFGRVRGDSDINKYQRHLVRGVVDGIGSYGNCMGVPTIGGEVSFDESYNGNILVNAFSLGLVKSDEIFLGVASGIGNPVMYVGSKTGRDGLGGAVMSSDSFTEESKSLRPTVQVGDPFTEKLLLEACLELFKTDAIIGIQDMGAAGLTSSAFEMAGKTGAGLIMHLDKVPAREEGMTPYDFMLSESQERMLICAKKGREQEIIDIFEKWELDVAVIGEVTDTERMELFWYGDKVCDMPIAPVSEEAPILDRPVARPAYLNEVIAKTVDDYAKVDDQEAYEKLLAPLEVVDKAWVYNQYDSMVQTNTTKHPGSLDASCIRIKENGRALAMSSDCNPRYCYIDPKGGAALAVVESGRNVAMSGARPLSITDCLNYGNPENPEVMWQFAQGCEGIKEACLELNTPVVSGNVSLYNETNGVSVFPTPAIAMVGLNDDQNKVLPSVFQHEGNNIVLIGETKGEFGGSLYIKELFGETVGTLPSFDYKTELKLWELVIEANKIGLLESAKDVNVGGIAIALSKMAAVSSKGITVKASVSNSRDIFDESQSRALLEVADADLEELLDMAAGLGLKAEVIGKIGGEEVKVNDVALPLEKVKDVYFNTFKRTIEQDL</sequence>
<evidence type="ECO:0000255" key="1">
    <source>
        <dbReference type="HAMAP-Rule" id="MF_00420"/>
    </source>
</evidence>
<accession>A6QAK6</accession>
<name>PURL_SULNB</name>
<proteinExistence type="inferred from homology"/>
<feature type="chain" id="PRO_1000050352" description="Phosphoribosylformylglycinamidine synthase subunit PurL">
    <location>
        <begin position="1"/>
        <end position="740"/>
    </location>
</feature>
<feature type="active site" evidence="1">
    <location>
        <position position="49"/>
    </location>
</feature>
<feature type="active site" description="Proton acceptor" evidence="1">
    <location>
        <position position="95"/>
    </location>
</feature>
<feature type="binding site" evidence="1">
    <location>
        <position position="52"/>
    </location>
    <ligand>
        <name>ATP</name>
        <dbReference type="ChEBI" id="CHEBI:30616"/>
    </ligand>
</feature>
<feature type="binding site" evidence="1">
    <location>
        <position position="91"/>
    </location>
    <ligand>
        <name>ATP</name>
        <dbReference type="ChEBI" id="CHEBI:30616"/>
    </ligand>
</feature>
<feature type="binding site" evidence="1">
    <location>
        <position position="93"/>
    </location>
    <ligand>
        <name>Mg(2+)</name>
        <dbReference type="ChEBI" id="CHEBI:18420"/>
        <label>1</label>
    </ligand>
</feature>
<feature type="binding site" evidence="1">
    <location>
        <begin position="94"/>
        <end position="97"/>
    </location>
    <ligand>
        <name>substrate</name>
    </ligand>
</feature>
<feature type="binding site" evidence="1">
    <location>
        <position position="116"/>
    </location>
    <ligand>
        <name>substrate</name>
    </ligand>
</feature>
<feature type="binding site" evidence="1">
    <location>
        <position position="117"/>
    </location>
    <ligand>
        <name>Mg(2+)</name>
        <dbReference type="ChEBI" id="CHEBI:18420"/>
        <label>2</label>
    </ligand>
</feature>
<feature type="binding site" evidence="1">
    <location>
        <position position="245"/>
    </location>
    <ligand>
        <name>substrate</name>
    </ligand>
</feature>
<feature type="binding site" evidence="1">
    <location>
        <position position="273"/>
    </location>
    <ligand>
        <name>Mg(2+)</name>
        <dbReference type="ChEBI" id="CHEBI:18420"/>
        <label>2</label>
    </ligand>
</feature>
<feature type="binding site" evidence="1">
    <location>
        <begin position="317"/>
        <end position="319"/>
    </location>
    <ligand>
        <name>substrate</name>
    </ligand>
</feature>
<feature type="binding site" evidence="1">
    <location>
        <position position="501"/>
    </location>
    <ligand>
        <name>ATP</name>
        <dbReference type="ChEBI" id="CHEBI:30616"/>
    </ligand>
</feature>
<feature type="binding site" evidence="1">
    <location>
        <position position="538"/>
    </location>
    <ligand>
        <name>ATP</name>
        <dbReference type="ChEBI" id="CHEBI:30616"/>
    </ligand>
</feature>
<feature type="binding site" evidence="1">
    <location>
        <position position="539"/>
    </location>
    <ligand>
        <name>Mg(2+)</name>
        <dbReference type="ChEBI" id="CHEBI:18420"/>
        <label>1</label>
    </ligand>
</feature>
<feature type="binding site" evidence="1">
    <location>
        <position position="541"/>
    </location>
    <ligand>
        <name>substrate</name>
    </ligand>
</feature>
<comment type="function">
    <text evidence="1">Part of the phosphoribosylformylglycinamidine synthase complex involved in the purines biosynthetic pathway. Catalyzes the ATP-dependent conversion of formylglycinamide ribonucleotide (FGAR) and glutamine to yield formylglycinamidine ribonucleotide (FGAM) and glutamate. The FGAM synthase complex is composed of three subunits. PurQ produces an ammonia molecule by converting glutamine to glutamate. PurL transfers the ammonia molecule to FGAR to form FGAM in an ATP-dependent manner. PurS interacts with PurQ and PurL and is thought to assist in the transfer of the ammonia molecule from PurQ to PurL.</text>
</comment>
<comment type="catalytic activity">
    <reaction evidence="1">
        <text>N(2)-formyl-N(1)-(5-phospho-beta-D-ribosyl)glycinamide + L-glutamine + ATP + H2O = 2-formamido-N(1)-(5-O-phospho-beta-D-ribosyl)acetamidine + L-glutamate + ADP + phosphate + H(+)</text>
        <dbReference type="Rhea" id="RHEA:17129"/>
        <dbReference type="ChEBI" id="CHEBI:15377"/>
        <dbReference type="ChEBI" id="CHEBI:15378"/>
        <dbReference type="ChEBI" id="CHEBI:29985"/>
        <dbReference type="ChEBI" id="CHEBI:30616"/>
        <dbReference type="ChEBI" id="CHEBI:43474"/>
        <dbReference type="ChEBI" id="CHEBI:58359"/>
        <dbReference type="ChEBI" id="CHEBI:147286"/>
        <dbReference type="ChEBI" id="CHEBI:147287"/>
        <dbReference type="ChEBI" id="CHEBI:456216"/>
        <dbReference type="EC" id="6.3.5.3"/>
    </reaction>
</comment>
<comment type="pathway">
    <text evidence="1">Purine metabolism; IMP biosynthesis via de novo pathway; 5-amino-1-(5-phospho-D-ribosyl)imidazole from N(2)-formyl-N(1)-(5-phospho-D-ribosyl)glycinamide: step 1/2.</text>
</comment>
<comment type="subunit">
    <text evidence="1">Monomer. Part of the FGAM synthase complex composed of 1 PurL, 1 PurQ and 2 PurS subunits.</text>
</comment>
<comment type="subcellular location">
    <subcellularLocation>
        <location evidence="1">Cytoplasm</location>
    </subcellularLocation>
</comment>
<comment type="similarity">
    <text evidence="1">Belongs to the FGAMS family.</text>
</comment>
<protein>
    <recommendedName>
        <fullName evidence="1">Phosphoribosylformylglycinamidine synthase subunit PurL</fullName>
        <shortName evidence="1">FGAM synthase</shortName>
        <ecNumber evidence="1">6.3.5.3</ecNumber>
    </recommendedName>
    <alternativeName>
        <fullName evidence="1">Formylglycinamide ribonucleotide amidotransferase subunit II</fullName>
        <shortName evidence="1">FGAR amidotransferase II</shortName>
        <shortName evidence="1">FGAR-AT II</shortName>
    </alternativeName>
    <alternativeName>
        <fullName evidence="1">Glutamine amidotransferase PurL</fullName>
    </alternativeName>
    <alternativeName>
        <fullName evidence="1">Phosphoribosylformylglycinamidine synthase subunit II</fullName>
    </alternativeName>
</protein>
<organism>
    <name type="scientific">Sulfurovum sp. (strain NBC37-1)</name>
    <dbReference type="NCBI Taxonomy" id="387093"/>
    <lineage>
        <taxon>Bacteria</taxon>
        <taxon>Pseudomonadati</taxon>
        <taxon>Campylobacterota</taxon>
        <taxon>Epsilonproteobacteria</taxon>
        <taxon>Campylobacterales</taxon>
        <taxon>Sulfurovaceae</taxon>
        <taxon>Sulfurovum</taxon>
    </lineage>
</organism>
<dbReference type="EC" id="6.3.5.3" evidence="1"/>
<dbReference type="EMBL" id="AP009179">
    <property type="protein sequence ID" value="BAF72515.1"/>
    <property type="molecule type" value="Genomic_DNA"/>
</dbReference>
<dbReference type="RefSeq" id="WP_012083318.1">
    <property type="nucleotide sequence ID" value="NC_009663.1"/>
</dbReference>
<dbReference type="SMR" id="A6QAK6"/>
<dbReference type="STRING" id="387093.SUN_1565"/>
<dbReference type="KEGG" id="sun:SUN_1565"/>
<dbReference type="eggNOG" id="COG0046">
    <property type="taxonomic scope" value="Bacteria"/>
</dbReference>
<dbReference type="HOGENOM" id="CLU_003100_0_1_7"/>
<dbReference type="OrthoDB" id="9804441at2"/>
<dbReference type="UniPathway" id="UPA00074">
    <property type="reaction ID" value="UER00128"/>
</dbReference>
<dbReference type="Proteomes" id="UP000006378">
    <property type="component" value="Chromosome"/>
</dbReference>
<dbReference type="GO" id="GO:0005737">
    <property type="term" value="C:cytoplasm"/>
    <property type="evidence" value="ECO:0007669"/>
    <property type="project" value="UniProtKB-SubCell"/>
</dbReference>
<dbReference type="GO" id="GO:0005524">
    <property type="term" value="F:ATP binding"/>
    <property type="evidence" value="ECO:0007669"/>
    <property type="project" value="UniProtKB-UniRule"/>
</dbReference>
<dbReference type="GO" id="GO:0000287">
    <property type="term" value="F:magnesium ion binding"/>
    <property type="evidence" value="ECO:0007669"/>
    <property type="project" value="UniProtKB-UniRule"/>
</dbReference>
<dbReference type="GO" id="GO:0004642">
    <property type="term" value="F:phosphoribosylformylglycinamidine synthase activity"/>
    <property type="evidence" value="ECO:0007669"/>
    <property type="project" value="UniProtKB-UniRule"/>
</dbReference>
<dbReference type="GO" id="GO:0006189">
    <property type="term" value="P:'de novo' IMP biosynthetic process"/>
    <property type="evidence" value="ECO:0007669"/>
    <property type="project" value="UniProtKB-UniRule"/>
</dbReference>
<dbReference type="CDD" id="cd02203">
    <property type="entry name" value="PurL_repeat1"/>
    <property type="match status" value="1"/>
</dbReference>
<dbReference type="CDD" id="cd02204">
    <property type="entry name" value="PurL_repeat2"/>
    <property type="match status" value="1"/>
</dbReference>
<dbReference type="FunFam" id="3.30.1330.10:FF:000004">
    <property type="entry name" value="Phosphoribosylformylglycinamidine synthase subunit PurL"/>
    <property type="match status" value="1"/>
</dbReference>
<dbReference type="Gene3D" id="3.90.650.10">
    <property type="entry name" value="PurM-like C-terminal domain"/>
    <property type="match status" value="2"/>
</dbReference>
<dbReference type="Gene3D" id="3.30.1330.10">
    <property type="entry name" value="PurM-like, N-terminal domain"/>
    <property type="match status" value="2"/>
</dbReference>
<dbReference type="HAMAP" id="MF_00420">
    <property type="entry name" value="PurL_2"/>
    <property type="match status" value="1"/>
</dbReference>
<dbReference type="InterPro" id="IPR010074">
    <property type="entry name" value="PRibForGlyAmidine_synth_PurL"/>
</dbReference>
<dbReference type="InterPro" id="IPR041609">
    <property type="entry name" value="PurL_linker"/>
</dbReference>
<dbReference type="InterPro" id="IPR010918">
    <property type="entry name" value="PurM-like_C_dom"/>
</dbReference>
<dbReference type="InterPro" id="IPR036676">
    <property type="entry name" value="PurM-like_C_sf"/>
</dbReference>
<dbReference type="InterPro" id="IPR016188">
    <property type="entry name" value="PurM-like_N"/>
</dbReference>
<dbReference type="InterPro" id="IPR036921">
    <property type="entry name" value="PurM-like_N_sf"/>
</dbReference>
<dbReference type="NCBIfam" id="TIGR01736">
    <property type="entry name" value="FGAM_synth_II"/>
    <property type="match status" value="1"/>
</dbReference>
<dbReference type="NCBIfam" id="NF002290">
    <property type="entry name" value="PRK01213.1"/>
    <property type="match status" value="1"/>
</dbReference>
<dbReference type="PANTHER" id="PTHR43555">
    <property type="entry name" value="PHOSPHORIBOSYLFORMYLGLYCINAMIDINE SYNTHASE SUBUNIT PURL"/>
    <property type="match status" value="1"/>
</dbReference>
<dbReference type="PANTHER" id="PTHR43555:SF1">
    <property type="entry name" value="PHOSPHORIBOSYLFORMYLGLYCINAMIDINE SYNTHASE SUBUNIT PURL"/>
    <property type="match status" value="1"/>
</dbReference>
<dbReference type="Pfam" id="PF00586">
    <property type="entry name" value="AIRS"/>
    <property type="match status" value="2"/>
</dbReference>
<dbReference type="Pfam" id="PF02769">
    <property type="entry name" value="AIRS_C"/>
    <property type="match status" value="2"/>
</dbReference>
<dbReference type="Pfam" id="PF18072">
    <property type="entry name" value="FGAR-AT_linker"/>
    <property type="match status" value="1"/>
</dbReference>
<dbReference type="PIRSF" id="PIRSF001587">
    <property type="entry name" value="FGAM_synthase_II"/>
    <property type="match status" value="1"/>
</dbReference>
<dbReference type="SUPFAM" id="SSF56042">
    <property type="entry name" value="PurM C-terminal domain-like"/>
    <property type="match status" value="2"/>
</dbReference>
<dbReference type="SUPFAM" id="SSF55326">
    <property type="entry name" value="PurM N-terminal domain-like"/>
    <property type="match status" value="2"/>
</dbReference>